<comment type="function">
    <text evidence="3">Multivalent scaffold protein that anchors the cAMP-dependent protein kinase/PKA to cytoskeletal and/or organelle-associated proteins, targeting the signal carried by cAMP to specific intracellular effectors. Association with the beta2-adrenergic receptor (beta2-AR) not only regulates beta2-AR signaling pathway, but also the activation by PKA by switching off the beta2-AR signaling cascade. Plays a role in long term synaptic potentiation by regulating protein trafficking from the dendritic recycling endosomes to the plasma membrane and controlling both structural and functional plasticity at excitatory synapses. Associates with ORAI1 pore-forming subunit of CRAC channels in Ca(2+) signaling microdomains where it recruits NFATC2/NFAT1 and couples store-operated Ca(2+) influx to calmodulin and calcineurin signaling and activation of NFAT-dependent transcriptional responses.</text>
</comment>
<comment type="subunit">
    <text evidence="1 2 3">Binding protein for dimer of the RII-beta regulatory subunit of cAMP-dependent protein kinase (PKA) and also for the protein kinase C (PKC) and the phosphatase calcineurin (PP2B). Each enzyme is inhibited when bound to the anchoring protein. Also binds the beta2-adrenergic receptor. Part of a complex containing AKAP5, ADCY5, ADCY6 and PDE4C (By similarity). Interacts with ADCY8, and enhances its phosphorylation at lipid rafts (By similarity). Interacts with ORAI1 (isoform alpha) (via N-terminus) upon store depletion and in response to LTC4. Does not interact with ORAI2 and ORAI3 paralogs. Interacts (via leucine zipper domain) with NFATC2/NFAT1 (By similarity). Interacts with calmodulin; the interaction is calcium-independent (By similarity). Interacts with KCNQ2; the interaction may help KCNQ2 channel complex to retain calcium-bound calmodulin (By similarity).</text>
</comment>
<comment type="subcellular location">
    <subcellularLocation>
        <location evidence="3">Postsynaptic recycling endosome membrane</location>
        <topology evidence="3">Lipid-anchor</topology>
    </subcellularLocation>
    <text evidence="3">Associates with lipid rafts.</text>
</comment>
<comment type="tissue specificity">
    <text>Predominantly in brain, and to a lesser extent in adrenal medulla, lung and anterior pituitary.</text>
</comment>
<comment type="domain">
    <text evidence="3">RII-alpha binding site, predicted to form an amphipathic helix, could participate in protein-protein interactions with a complementary surface on the R-subunit dimer.</text>
</comment>
<comment type="domain">
    <text evidence="3">The N-terminal region, which is highly basic, is required for interaction with calmodulin.</text>
</comment>
<comment type="PTM">
    <text evidence="3">Palmitoylated. Palmitoylation at Cys-36 and Cys-129 play a key role in the targeting of AKAP5 to lipid rafts. Palmitoylation by ZDHHC2 is required for AKAP5 function in LTP-stimulated recycling endosome exocytosis.</text>
</comment>
<accession>P24275</accession>
<name>AKAP5_BOVIN</name>
<gene>
    <name type="primary">AKAP5</name>
    <name type="synonym">AKAP75</name>
</gene>
<reference key="1">
    <citation type="journal article" date="1992" name="J. Biol. Chem.">
        <title>Cloning and expression of an intron-less gene for AKAP 75, an anchor protein for the regulatory subunit of cAMP-dependent protein kinase II beta.</title>
        <authorList>
            <person name="Hirsch A.H."/>
            <person name="Glantz S.B."/>
            <person name="Li Y."/>
            <person name="You Y."/>
            <person name="Rubin C.S."/>
        </authorList>
    </citation>
    <scope>NUCLEOTIDE SEQUENCE [GENOMIC DNA]</scope>
    <source>
        <tissue>Brain</tissue>
    </source>
</reference>
<reference key="2">
    <citation type="journal article" date="1991" name="J. Biol. Chem.">
        <title>Molecular characterization of bovine brain p75, a high affinity binding protein for the regulatory subunit of cAMP-dependent protein kinase II beta.</title>
        <authorList>
            <person name="Bregman D.B."/>
            <person name="Hirsch A.H."/>
            <person name="Rubin C.S."/>
        </authorList>
    </citation>
    <scope>NUCLEOTIDE SEQUENCE [MRNA] OF 170-428</scope>
    <source>
        <tissue>Brain</tissue>
    </source>
</reference>
<proteinExistence type="evidence at transcript level"/>
<protein>
    <recommendedName>
        <fullName>A-kinase anchor protein 5</fullName>
        <shortName>AKAP-5</shortName>
    </recommendedName>
    <alternativeName>
        <fullName>A-kinase anchor protein 75 kDa</fullName>
        <shortName>AKAP 75</shortName>
        <shortName>P75</shortName>
    </alternativeName>
    <alternativeName>
        <fullName>cAMP-dependent protein kinase regulatory subunit II high affinity-binding protein</fullName>
    </alternativeName>
</protein>
<feature type="chain" id="PRO_0000064528" description="A-kinase anchor protein 5">
    <location>
        <begin position="1"/>
        <end position="428"/>
    </location>
</feature>
<feature type="region of interest" description="Disordered" evidence="6">
    <location>
        <begin position="1"/>
        <end position="207"/>
    </location>
</feature>
<feature type="region of interest" description="Essential to the intracellular anchoring function">
    <location>
        <begin position="1"/>
        <end position="170"/>
    </location>
</feature>
<feature type="region of interest" description="Disordered" evidence="6">
    <location>
        <begin position="237"/>
        <end position="313"/>
    </location>
</feature>
<feature type="region of interest" description="RII-beta subunit binding domain">
    <location>
        <begin position="389"/>
        <end position="410"/>
    </location>
</feature>
<feature type="region of interest" description="Tethers NFATC2 to CRAC channels" evidence="3">
    <location>
        <begin position="411"/>
        <end position="428"/>
    </location>
</feature>
<feature type="short sequence motif" description="AKAP CaM-binding" evidence="5">
    <location>
        <begin position="76"/>
        <end position="96"/>
    </location>
</feature>
<feature type="compositionally biased region" description="Basic and acidic residues" evidence="6">
    <location>
        <begin position="10"/>
        <end position="32"/>
    </location>
</feature>
<feature type="compositionally biased region" description="Basic residues" evidence="6">
    <location>
        <begin position="37"/>
        <end position="48"/>
    </location>
</feature>
<feature type="compositionally biased region" description="Basic and acidic residues" evidence="6">
    <location>
        <begin position="57"/>
        <end position="68"/>
    </location>
</feature>
<feature type="compositionally biased region" description="Basic and acidic residues" evidence="6">
    <location>
        <begin position="133"/>
        <end position="156"/>
    </location>
</feature>
<feature type="compositionally biased region" description="Polar residues" evidence="6">
    <location>
        <begin position="161"/>
        <end position="170"/>
    </location>
</feature>
<feature type="compositionally biased region" description="Basic and acidic residues" evidence="6">
    <location>
        <begin position="171"/>
        <end position="191"/>
    </location>
</feature>
<feature type="compositionally biased region" description="Basic and acidic residues" evidence="6">
    <location>
        <begin position="290"/>
        <end position="311"/>
    </location>
</feature>
<feature type="modified residue" description="Phosphothreonine; by PKC" evidence="4">
    <location>
        <position position="87"/>
    </location>
</feature>
<feature type="modified residue" description="Phosphoserine; by PKA" evidence="4">
    <location>
        <position position="92"/>
    </location>
</feature>
<feature type="modified residue" description="Phosphoserine; by PKC" evidence="4">
    <location>
        <position position="94"/>
    </location>
</feature>
<feature type="lipid moiety-binding region" description="S-palmitoyl cysteine" evidence="1">
    <location>
        <position position="36"/>
    </location>
</feature>
<feature type="lipid moiety-binding region" description="S-palmitoyl cysteine" evidence="1">
    <location>
        <position position="129"/>
    </location>
</feature>
<feature type="sequence conflict" description="In Ref. 2; AAA30682." evidence="7" ref="2">
    <original>R</original>
    <variation>T</variation>
    <location>
        <position position="225"/>
    </location>
</feature>
<sequence>MEITVSEIQVESKDETRSAEVRPQDERQEEKASMLCFKRRKKAAKAMKPKASSKAADAAKKCPPEARASDQPQRPGGAWDSIKRLVTRRKRSESSKQQKPFKAKLQSEINAEDANPSKKKAKSRLKIPCIKFSKGEKRSNHSKIIEDSDRSVKVQEAENLVTKTQTQSDDQATKSKSPQDVREDVSQKGDDEVCESNVNNSITSPGEKVISVELELDMGHSAIQRGTLILEKDTEMLEEKQSIQPQHVSPLEASDTEQELPVGSEVPPSSAVPDQQILEEARNGVLESGPDWKEHESREIVVEESKPKDTELSQELDFQENEITAEKPKPEESKRMEPIAIIITDTEISEFDVKKSKNVPKPFLISIENEQVGVFANDSGFEGRTSEQYETLLIETASSLVKNAIQLSIEQLVNEMASDDNTINNRLQ</sequence>
<evidence type="ECO:0000250" key="1"/>
<evidence type="ECO:0000250" key="2">
    <source>
        <dbReference type="UniProtKB" id="P24587"/>
    </source>
</evidence>
<evidence type="ECO:0000250" key="3">
    <source>
        <dbReference type="UniProtKB" id="P24588"/>
    </source>
</evidence>
<evidence type="ECO:0000255" key="4"/>
<evidence type="ECO:0000255" key="5">
    <source>
        <dbReference type="PROSITE-ProRule" id="PRU01241"/>
    </source>
</evidence>
<evidence type="ECO:0000256" key="6">
    <source>
        <dbReference type="SAM" id="MobiDB-lite"/>
    </source>
</evidence>
<evidence type="ECO:0000305" key="7"/>
<keyword id="KW-0112">Calmodulin-binding</keyword>
<keyword id="KW-0967">Endosome</keyword>
<keyword id="KW-0449">Lipoprotein</keyword>
<keyword id="KW-0472">Membrane</keyword>
<keyword id="KW-0564">Palmitate</keyword>
<keyword id="KW-0597">Phosphoprotein</keyword>
<keyword id="KW-1185">Reference proteome</keyword>
<keyword id="KW-0770">Synapse</keyword>
<dbReference type="EMBL" id="M82914">
    <property type="protein sequence ID" value="AAA30366.1"/>
    <property type="molecule type" value="Genomic_DNA"/>
</dbReference>
<dbReference type="EMBL" id="M60292">
    <property type="protein sequence ID" value="AAA30682.1"/>
    <property type="molecule type" value="mRNA"/>
</dbReference>
<dbReference type="PIR" id="A42311">
    <property type="entry name" value="A42311"/>
</dbReference>
<dbReference type="RefSeq" id="NP_776661.1">
    <property type="nucleotide sequence ID" value="NM_174236.1"/>
</dbReference>
<dbReference type="SMR" id="P24275"/>
<dbReference type="DIP" id="DIP-172N"/>
<dbReference type="FunCoup" id="P24275">
    <property type="interactions" value="490"/>
</dbReference>
<dbReference type="STRING" id="9913.ENSBTAP00000012705"/>
<dbReference type="PaxDb" id="9913-ENSBTAP00000012705"/>
<dbReference type="GeneID" id="281612"/>
<dbReference type="KEGG" id="bta:281612"/>
<dbReference type="CTD" id="9495"/>
<dbReference type="eggNOG" id="ENOG502S1NI">
    <property type="taxonomic scope" value="Eukaryota"/>
</dbReference>
<dbReference type="InParanoid" id="P24275"/>
<dbReference type="Proteomes" id="UP000009136">
    <property type="component" value="Unplaced"/>
</dbReference>
<dbReference type="GO" id="GO:0032590">
    <property type="term" value="C:dendrite membrane"/>
    <property type="evidence" value="ECO:0000318"/>
    <property type="project" value="GO_Central"/>
</dbReference>
<dbReference type="GO" id="GO:0043197">
    <property type="term" value="C:dendritic spine"/>
    <property type="evidence" value="ECO:0000318"/>
    <property type="project" value="GO_Central"/>
</dbReference>
<dbReference type="GO" id="GO:0060076">
    <property type="term" value="C:excitatory synapse"/>
    <property type="evidence" value="ECO:0000318"/>
    <property type="project" value="GO_Central"/>
</dbReference>
<dbReference type="GO" id="GO:0045121">
    <property type="term" value="C:membrane raft"/>
    <property type="evidence" value="ECO:0000250"/>
    <property type="project" value="UniProtKB"/>
</dbReference>
<dbReference type="GO" id="GO:0005886">
    <property type="term" value="C:plasma membrane"/>
    <property type="evidence" value="ECO:0000250"/>
    <property type="project" value="UniProtKB"/>
</dbReference>
<dbReference type="GO" id="GO:0014069">
    <property type="term" value="C:postsynaptic density"/>
    <property type="evidence" value="ECO:0000318"/>
    <property type="project" value="GO_Central"/>
</dbReference>
<dbReference type="GO" id="GO:0098944">
    <property type="term" value="C:postsynaptic recycling endosome membrane"/>
    <property type="evidence" value="ECO:0007669"/>
    <property type="project" value="UniProtKB-SubCell"/>
</dbReference>
<dbReference type="GO" id="GO:0008179">
    <property type="term" value="F:adenylate cyclase binding"/>
    <property type="evidence" value="ECO:0000318"/>
    <property type="project" value="GO_Central"/>
</dbReference>
<dbReference type="GO" id="GO:0031698">
    <property type="term" value="F:beta-2 adrenergic receptor binding"/>
    <property type="evidence" value="ECO:0000318"/>
    <property type="project" value="GO_Central"/>
</dbReference>
<dbReference type="GO" id="GO:0005516">
    <property type="term" value="F:calmodulin binding"/>
    <property type="evidence" value="ECO:0007669"/>
    <property type="project" value="UniProtKB-KW"/>
</dbReference>
<dbReference type="GO" id="GO:0050811">
    <property type="term" value="F:GABA receptor binding"/>
    <property type="evidence" value="ECO:0000318"/>
    <property type="project" value="GO_Central"/>
</dbReference>
<dbReference type="GO" id="GO:0035254">
    <property type="term" value="F:glutamate receptor binding"/>
    <property type="evidence" value="ECO:0000318"/>
    <property type="project" value="GO_Central"/>
</dbReference>
<dbReference type="GO" id="GO:0060090">
    <property type="term" value="F:molecular adaptor activity"/>
    <property type="evidence" value="ECO:0000318"/>
    <property type="project" value="GO_Central"/>
</dbReference>
<dbReference type="GO" id="GO:0034237">
    <property type="term" value="F:protein kinase A regulatory subunit binding"/>
    <property type="evidence" value="ECO:0000318"/>
    <property type="project" value="GO_Central"/>
</dbReference>
<dbReference type="GO" id="GO:0007194">
    <property type="term" value="P:negative regulation of adenylate cyclase activity"/>
    <property type="evidence" value="ECO:0000250"/>
    <property type="project" value="UniProtKB"/>
</dbReference>
<dbReference type="InterPro" id="IPR042375">
    <property type="entry name" value="AKAP5"/>
</dbReference>
<dbReference type="InterPro" id="IPR001573">
    <property type="entry name" value="AKAP_WSK"/>
</dbReference>
<dbReference type="PANTHER" id="PTHR15182:SF0">
    <property type="entry name" value="A-KINASE ANCHOR PROTEIN 5"/>
    <property type="match status" value="1"/>
</dbReference>
<dbReference type="PANTHER" id="PTHR15182">
    <property type="entry name" value="A-KINASE ANCHOR PROTEIN 5-RELATED"/>
    <property type="match status" value="1"/>
</dbReference>
<dbReference type="Pfam" id="PF03832">
    <property type="entry name" value="WSK"/>
    <property type="match status" value="1"/>
</dbReference>
<dbReference type="PROSITE" id="PS51893">
    <property type="entry name" value="AKAP_CAM_BD"/>
    <property type="match status" value="1"/>
</dbReference>
<organism>
    <name type="scientific">Bos taurus</name>
    <name type="common">Bovine</name>
    <dbReference type="NCBI Taxonomy" id="9913"/>
    <lineage>
        <taxon>Eukaryota</taxon>
        <taxon>Metazoa</taxon>
        <taxon>Chordata</taxon>
        <taxon>Craniata</taxon>
        <taxon>Vertebrata</taxon>
        <taxon>Euteleostomi</taxon>
        <taxon>Mammalia</taxon>
        <taxon>Eutheria</taxon>
        <taxon>Laurasiatheria</taxon>
        <taxon>Artiodactyla</taxon>
        <taxon>Ruminantia</taxon>
        <taxon>Pecora</taxon>
        <taxon>Bovidae</taxon>
        <taxon>Bovinae</taxon>
        <taxon>Bos</taxon>
    </lineage>
</organism>